<organism>
    <name type="scientific">Geobacter sulfurreducens (strain ATCC 51573 / DSM 12127 / PCA)</name>
    <dbReference type="NCBI Taxonomy" id="243231"/>
    <lineage>
        <taxon>Bacteria</taxon>
        <taxon>Pseudomonadati</taxon>
        <taxon>Thermodesulfobacteriota</taxon>
        <taxon>Desulfuromonadia</taxon>
        <taxon>Geobacterales</taxon>
        <taxon>Geobacteraceae</taxon>
        <taxon>Geobacter</taxon>
    </lineage>
</organism>
<protein>
    <recommendedName>
        <fullName evidence="1">Argininosuccinate lyase</fullName>
        <shortName evidence="1">ASAL</shortName>
        <ecNumber evidence="1">4.3.2.1</ecNumber>
    </recommendedName>
    <alternativeName>
        <fullName evidence="1">Arginosuccinase</fullName>
    </alternativeName>
</protein>
<gene>
    <name evidence="1" type="primary">argH</name>
    <name type="ordered locus">GSU0156</name>
</gene>
<comment type="catalytic activity">
    <reaction evidence="1">
        <text>2-(N(omega)-L-arginino)succinate = fumarate + L-arginine</text>
        <dbReference type="Rhea" id="RHEA:24020"/>
        <dbReference type="ChEBI" id="CHEBI:29806"/>
        <dbReference type="ChEBI" id="CHEBI:32682"/>
        <dbReference type="ChEBI" id="CHEBI:57472"/>
        <dbReference type="EC" id="4.3.2.1"/>
    </reaction>
</comment>
<comment type="pathway">
    <text evidence="1">Amino-acid biosynthesis; L-arginine biosynthesis; L-arginine from L-ornithine and carbamoyl phosphate: step 3/3.</text>
</comment>
<comment type="subcellular location">
    <subcellularLocation>
        <location evidence="1">Cytoplasm</location>
    </subcellularLocation>
</comment>
<comment type="similarity">
    <text evidence="1">Belongs to the lyase 1 family. Argininosuccinate lyase subfamily.</text>
</comment>
<evidence type="ECO:0000255" key="1">
    <source>
        <dbReference type="HAMAP-Rule" id="MF_00006"/>
    </source>
</evidence>
<name>ARLY_GEOSL</name>
<proteinExistence type="inferred from homology"/>
<sequence>MAHEKLWGGRFSEPTDQFVEEFTASIDFDKRLYHQDIRGSIAHARMLGKQGILPMAEVEKIVAGLQEVLARIEAGKFDFSVALEDIHMNIEARLTEKIGEAGKRLHTGRSRNDQVALDIRLYLRDEIVEISAYLDMLVDSLIYQAEANLGVIMPGYTHLQTAQPILFSHHMMAYVEMFTRDKGRMEDCLRRMNVLPLGAGALAGTTFPIDREHVAELLDFPGVTRNSLDSVSDRDFALEFMGASSILMMHLSRFSEELILWSTSEFKFVELTDSFCTGSSIMPQKKNPDVPELVRGKTGRVYGNLMALLTVMKALPLAYNKDMQEDKEPLFDTIDTVKGSLKIFADMVREMRINAGNMRAAAAKGFSTATDVADYLVRQGMPFRDAHEVVGKTVAYCIANGKDLPDLTMDEWQGFSDKIGEDIFDAITLEASVNARVATGGTALERVKAEIERAKVGR</sequence>
<dbReference type="EC" id="4.3.2.1" evidence="1"/>
<dbReference type="EMBL" id="AE017180">
    <property type="protein sequence ID" value="AAR33491.1"/>
    <property type="molecule type" value="Genomic_DNA"/>
</dbReference>
<dbReference type="RefSeq" id="NP_951218.1">
    <property type="nucleotide sequence ID" value="NC_002939.5"/>
</dbReference>
<dbReference type="RefSeq" id="WP_010940832.1">
    <property type="nucleotide sequence ID" value="NC_002939.5"/>
</dbReference>
<dbReference type="SMR" id="Q74GT9"/>
<dbReference type="FunCoup" id="Q74GT9">
    <property type="interactions" value="489"/>
</dbReference>
<dbReference type="STRING" id="243231.GSU0156"/>
<dbReference type="EnsemblBacteria" id="AAR33491">
    <property type="protein sequence ID" value="AAR33491"/>
    <property type="gene ID" value="GSU0156"/>
</dbReference>
<dbReference type="KEGG" id="gsu:GSU0156"/>
<dbReference type="PATRIC" id="fig|243231.5.peg.157"/>
<dbReference type="eggNOG" id="COG0165">
    <property type="taxonomic scope" value="Bacteria"/>
</dbReference>
<dbReference type="HOGENOM" id="CLU_027272_2_3_7"/>
<dbReference type="InParanoid" id="Q74GT9"/>
<dbReference type="OrthoDB" id="9769623at2"/>
<dbReference type="UniPathway" id="UPA00068">
    <property type="reaction ID" value="UER00114"/>
</dbReference>
<dbReference type="Proteomes" id="UP000000577">
    <property type="component" value="Chromosome"/>
</dbReference>
<dbReference type="GO" id="GO:0005829">
    <property type="term" value="C:cytosol"/>
    <property type="evidence" value="ECO:0000318"/>
    <property type="project" value="GO_Central"/>
</dbReference>
<dbReference type="GO" id="GO:0004056">
    <property type="term" value="F:argininosuccinate lyase activity"/>
    <property type="evidence" value="ECO:0000318"/>
    <property type="project" value="GO_Central"/>
</dbReference>
<dbReference type="GO" id="GO:0042450">
    <property type="term" value="P:arginine biosynthetic process via ornithine"/>
    <property type="evidence" value="ECO:0000318"/>
    <property type="project" value="GO_Central"/>
</dbReference>
<dbReference type="GO" id="GO:0006526">
    <property type="term" value="P:L-arginine biosynthetic process"/>
    <property type="evidence" value="ECO:0007669"/>
    <property type="project" value="UniProtKB-UniRule"/>
</dbReference>
<dbReference type="CDD" id="cd01359">
    <property type="entry name" value="Argininosuccinate_lyase"/>
    <property type="match status" value="1"/>
</dbReference>
<dbReference type="FunFam" id="1.10.275.10:FF:000002">
    <property type="entry name" value="Argininosuccinate lyase"/>
    <property type="match status" value="1"/>
</dbReference>
<dbReference type="FunFam" id="1.10.40.30:FF:000001">
    <property type="entry name" value="Argininosuccinate lyase"/>
    <property type="match status" value="1"/>
</dbReference>
<dbReference type="FunFam" id="1.20.200.10:FF:000002">
    <property type="entry name" value="Argininosuccinate lyase"/>
    <property type="match status" value="1"/>
</dbReference>
<dbReference type="Gene3D" id="1.10.40.30">
    <property type="entry name" value="Fumarase/aspartase (C-terminal domain)"/>
    <property type="match status" value="1"/>
</dbReference>
<dbReference type="Gene3D" id="1.20.200.10">
    <property type="entry name" value="Fumarase/aspartase (Central domain)"/>
    <property type="match status" value="1"/>
</dbReference>
<dbReference type="Gene3D" id="1.10.275.10">
    <property type="entry name" value="Fumarase/aspartase (N-terminal domain)"/>
    <property type="match status" value="1"/>
</dbReference>
<dbReference type="HAMAP" id="MF_00006">
    <property type="entry name" value="Arg_succ_lyase"/>
    <property type="match status" value="1"/>
</dbReference>
<dbReference type="InterPro" id="IPR029419">
    <property type="entry name" value="Arg_succ_lyase_C"/>
</dbReference>
<dbReference type="InterPro" id="IPR009049">
    <property type="entry name" value="Argininosuccinate_lyase"/>
</dbReference>
<dbReference type="InterPro" id="IPR024083">
    <property type="entry name" value="Fumarase/histidase_N"/>
</dbReference>
<dbReference type="InterPro" id="IPR020557">
    <property type="entry name" value="Fumarate_lyase_CS"/>
</dbReference>
<dbReference type="InterPro" id="IPR000362">
    <property type="entry name" value="Fumarate_lyase_fam"/>
</dbReference>
<dbReference type="InterPro" id="IPR022761">
    <property type="entry name" value="Fumarate_lyase_N"/>
</dbReference>
<dbReference type="InterPro" id="IPR008948">
    <property type="entry name" value="L-Aspartase-like"/>
</dbReference>
<dbReference type="NCBIfam" id="TIGR00838">
    <property type="entry name" value="argH"/>
    <property type="match status" value="1"/>
</dbReference>
<dbReference type="PANTHER" id="PTHR43814">
    <property type="entry name" value="ARGININOSUCCINATE LYASE"/>
    <property type="match status" value="1"/>
</dbReference>
<dbReference type="PANTHER" id="PTHR43814:SF1">
    <property type="entry name" value="ARGININOSUCCINATE LYASE"/>
    <property type="match status" value="1"/>
</dbReference>
<dbReference type="Pfam" id="PF14698">
    <property type="entry name" value="ASL_C2"/>
    <property type="match status" value="1"/>
</dbReference>
<dbReference type="Pfam" id="PF00206">
    <property type="entry name" value="Lyase_1"/>
    <property type="match status" value="1"/>
</dbReference>
<dbReference type="PRINTS" id="PR00145">
    <property type="entry name" value="ARGSUCLYASE"/>
</dbReference>
<dbReference type="PRINTS" id="PR00149">
    <property type="entry name" value="FUMRATELYASE"/>
</dbReference>
<dbReference type="SUPFAM" id="SSF48557">
    <property type="entry name" value="L-aspartase-like"/>
    <property type="match status" value="1"/>
</dbReference>
<dbReference type="PROSITE" id="PS00163">
    <property type="entry name" value="FUMARATE_LYASES"/>
    <property type="match status" value="1"/>
</dbReference>
<reference key="1">
    <citation type="journal article" date="2003" name="Science">
        <title>Genome of Geobacter sulfurreducens: metal reduction in subsurface environments.</title>
        <authorList>
            <person name="Methe B.A."/>
            <person name="Nelson K.E."/>
            <person name="Eisen J.A."/>
            <person name="Paulsen I.T."/>
            <person name="Nelson W.C."/>
            <person name="Heidelberg J.F."/>
            <person name="Wu D."/>
            <person name="Wu M."/>
            <person name="Ward N.L."/>
            <person name="Beanan M.J."/>
            <person name="Dodson R.J."/>
            <person name="Madupu R."/>
            <person name="Brinkac L.M."/>
            <person name="Daugherty S.C."/>
            <person name="DeBoy R.T."/>
            <person name="Durkin A.S."/>
            <person name="Gwinn M.L."/>
            <person name="Kolonay J.F."/>
            <person name="Sullivan S.A."/>
            <person name="Haft D.H."/>
            <person name="Selengut J."/>
            <person name="Davidsen T.M."/>
            <person name="Zafar N."/>
            <person name="White O."/>
            <person name="Tran B."/>
            <person name="Romero C."/>
            <person name="Forberger H.A."/>
            <person name="Weidman J.F."/>
            <person name="Khouri H.M."/>
            <person name="Feldblyum T.V."/>
            <person name="Utterback T.R."/>
            <person name="Van Aken S.E."/>
            <person name="Lovley D.R."/>
            <person name="Fraser C.M."/>
        </authorList>
    </citation>
    <scope>NUCLEOTIDE SEQUENCE [LARGE SCALE GENOMIC DNA]</scope>
    <source>
        <strain>ATCC 51573 / DSM 12127 / PCA</strain>
    </source>
</reference>
<accession>Q74GT9</accession>
<feature type="chain" id="PRO_0000137773" description="Argininosuccinate lyase">
    <location>
        <begin position="1"/>
        <end position="458"/>
    </location>
</feature>
<keyword id="KW-0028">Amino-acid biosynthesis</keyword>
<keyword id="KW-0055">Arginine biosynthesis</keyword>
<keyword id="KW-0963">Cytoplasm</keyword>
<keyword id="KW-0456">Lyase</keyword>
<keyword id="KW-1185">Reference proteome</keyword>